<sequence length="309" mass="34666">MDPRCTMGLAILIFVTVLLISDAVSVETQAYFNGTAYLPCPFTKAQNISLSELVVFWQDQQKLVLYEHYLGTEKLDSVNAKYLGRTSFDRNNWTLRLHNVQIKDMGSYDCFIQKKPPTGSIILQQTLTELSVIANFSEPEIKLAQNVTGNSGINLTCTSKQGHPKPKKMYFLITNSTNEYGDNMQISQDNVTELFSISNSLSLSFPDGVWHMTVVCVLETESMKISSKPLNFTQEFPSPQTYWKEITASVTVALLLVMLLIIVCHKKPNQPSRPSNTASKLERDSNADRETINLKELEPQIASAKPNAE</sequence>
<evidence type="ECO:0000250" key="1"/>
<evidence type="ECO:0000250" key="2">
    <source>
        <dbReference type="UniProtKB" id="P42081"/>
    </source>
</evidence>
<evidence type="ECO:0000255" key="3"/>
<evidence type="ECO:0000255" key="4">
    <source>
        <dbReference type="PROSITE-ProRule" id="PRU00114"/>
    </source>
</evidence>
<evidence type="ECO:0000256" key="5">
    <source>
        <dbReference type="SAM" id="MobiDB-lite"/>
    </source>
</evidence>
<evidence type="ECO:0000269" key="6">
    <source>
    </source>
</evidence>
<evidence type="ECO:0000305" key="7"/>
<proteinExistence type="evidence at protein level"/>
<protein>
    <recommendedName>
        <fullName>T-lymphocyte activation antigen CD86</fullName>
    </recommendedName>
    <alternativeName>
        <fullName>Activation B7-2 antigen</fullName>
    </alternativeName>
    <alternativeName>
        <fullName>Early T-cell costimulatory molecule 1</fullName>
        <shortName>ETC-1</shortName>
    </alternativeName>
    <cdAntigenName>CD86</cdAntigenName>
</protein>
<name>CD86_MOUSE</name>
<gene>
    <name type="primary">Cd86</name>
</gene>
<dbReference type="EMBL" id="L25606">
    <property type="protein sequence ID" value="AAA79770.1"/>
    <property type="molecule type" value="mRNA"/>
</dbReference>
<dbReference type="EMBL" id="S70108">
    <property type="protein sequence ID" value="AAB30744.2"/>
    <property type="status" value="ALT_INIT"/>
    <property type="molecule type" value="mRNA"/>
</dbReference>
<dbReference type="EMBL" id="U39456">
    <property type="protein sequence ID" value="AAC52334.1"/>
    <property type="molecule type" value="Genomic_DNA"/>
</dbReference>
<dbReference type="EMBL" id="U39459">
    <property type="protein sequence ID" value="AAC52334.1"/>
    <property type="status" value="JOINED"/>
    <property type="molecule type" value="Genomic_DNA"/>
</dbReference>
<dbReference type="EMBL" id="U39461">
    <property type="protein sequence ID" value="AAC52334.1"/>
    <property type="status" value="JOINED"/>
    <property type="molecule type" value="Genomic_DNA"/>
</dbReference>
<dbReference type="EMBL" id="U39462">
    <property type="protein sequence ID" value="AAC52334.1"/>
    <property type="status" value="JOINED"/>
    <property type="molecule type" value="Genomic_DNA"/>
</dbReference>
<dbReference type="EMBL" id="U39463">
    <property type="protein sequence ID" value="AAC52334.1"/>
    <property type="status" value="JOINED"/>
    <property type="molecule type" value="Genomic_DNA"/>
</dbReference>
<dbReference type="EMBL" id="U39464">
    <property type="protein sequence ID" value="AAC52334.1"/>
    <property type="status" value="JOINED"/>
    <property type="molecule type" value="Genomic_DNA"/>
</dbReference>
<dbReference type="EMBL" id="U39465">
    <property type="protein sequence ID" value="AAC52334.1"/>
    <property type="status" value="JOINED"/>
    <property type="molecule type" value="Genomic_DNA"/>
</dbReference>
<dbReference type="EMBL" id="U39466">
    <property type="protein sequence ID" value="AAC52334.1"/>
    <property type="status" value="JOINED"/>
    <property type="molecule type" value="Genomic_DNA"/>
</dbReference>
<dbReference type="EMBL" id="U39456">
    <property type="protein sequence ID" value="AAC52336.1"/>
    <property type="molecule type" value="Genomic_DNA"/>
</dbReference>
<dbReference type="EMBL" id="U39461">
    <property type="protein sequence ID" value="AAC52336.1"/>
    <property type="status" value="JOINED"/>
    <property type="molecule type" value="Genomic_DNA"/>
</dbReference>
<dbReference type="EMBL" id="U39462">
    <property type="protein sequence ID" value="AAC52336.1"/>
    <property type="status" value="JOINED"/>
    <property type="molecule type" value="Genomic_DNA"/>
</dbReference>
<dbReference type="EMBL" id="U39463">
    <property type="protein sequence ID" value="AAC52336.1"/>
    <property type="status" value="JOINED"/>
    <property type="molecule type" value="Genomic_DNA"/>
</dbReference>
<dbReference type="EMBL" id="U39464">
    <property type="protein sequence ID" value="AAC52336.1"/>
    <property type="status" value="JOINED"/>
    <property type="molecule type" value="Genomic_DNA"/>
</dbReference>
<dbReference type="EMBL" id="U39465">
    <property type="protein sequence ID" value="AAC52336.1"/>
    <property type="status" value="JOINED"/>
    <property type="molecule type" value="Genomic_DNA"/>
</dbReference>
<dbReference type="EMBL" id="U39466">
    <property type="protein sequence ID" value="AAC52336.1"/>
    <property type="status" value="JOINED"/>
    <property type="molecule type" value="Genomic_DNA"/>
</dbReference>
<dbReference type="CCDS" id="CCDS28155.1">
    <molecule id="P42082-1"/>
</dbReference>
<dbReference type="PIR" id="I49522">
    <property type="entry name" value="I49522"/>
</dbReference>
<dbReference type="RefSeq" id="NP_062261.3">
    <molecule id="P42082-1"/>
    <property type="nucleotide sequence ID" value="NM_019388.3"/>
</dbReference>
<dbReference type="RefSeq" id="XP_011244114.1">
    <molecule id="P42082-2"/>
    <property type="nucleotide sequence ID" value="XM_011245812.3"/>
</dbReference>
<dbReference type="SMR" id="P42082"/>
<dbReference type="FunCoup" id="P42082">
    <property type="interactions" value="633"/>
</dbReference>
<dbReference type="STRING" id="10090.ENSMUSP00000087047"/>
<dbReference type="GlyCosmos" id="P42082">
    <property type="glycosylation" value="9 sites, No reported glycans"/>
</dbReference>
<dbReference type="GlyGen" id="P42082">
    <property type="glycosylation" value="9 sites"/>
</dbReference>
<dbReference type="iPTMnet" id="P42082"/>
<dbReference type="PhosphoSitePlus" id="P42082"/>
<dbReference type="SwissPalm" id="P42082"/>
<dbReference type="PaxDb" id="10090-ENSMUSP00000087047"/>
<dbReference type="PeptideAtlas" id="P42082"/>
<dbReference type="ProteomicsDB" id="265631">
    <molecule id="P42082-1"/>
</dbReference>
<dbReference type="ProteomicsDB" id="265632">
    <molecule id="P42082-2"/>
</dbReference>
<dbReference type="ABCD" id="P42082">
    <property type="antibodies" value="55 sequenced antibodies"/>
</dbReference>
<dbReference type="Antibodypedia" id="3810">
    <property type="antibodies" value="2295 antibodies from 51 providers"/>
</dbReference>
<dbReference type="DNASU" id="12524"/>
<dbReference type="Ensembl" id="ENSMUST00000089620.11">
    <molecule id="P42082-1"/>
    <property type="protein sequence ID" value="ENSMUSP00000087047.5"/>
    <property type="gene ID" value="ENSMUSG00000022901.14"/>
</dbReference>
<dbReference type="GeneID" id="12524"/>
<dbReference type="KEGG" id="mmu:12524"/>
<dbReference type="UCSC" id="uc007zcq.2">
    <molecule id="P42082-1"/>
    <property type="organism name" value="mouse"/>
</dbReference>
<dbReference type="AGR" id="MGI:101773"/>
<dbReference type="CTD" id="942"/>
<dbReference type="MGI" id="MGI:101773">
    <property type="gene designation" value="Cd86"/>
</dbReference>
<dbReference type="VEuPathDB" id="HostDB:ENSMUSG00000022901"/>
<dbReference type="eggNOG" id="ENOG502S1FF">
    <property type="taxonomic scope" value="Eukaryota"/>
</dbReference>
<dbReference type="GeneTree" id="ENSGT00940000161500"/>
<dbReference type="HOGENOM" id="CLU_071073_0_0_1"/>
<dbReference type="InParanoid" id="P42082"/>
<dbReference type="OMA" id="LPCQFTN"/>
<dbReference type="OrthoDB" id="5857426at2759"/>
<dbReference type="PhylomeDB" id="P42082"/>
<dbReference type="TreeFam" id="TF331083"/>
<dbReference type="Reactome" id="R-MMU-1257604">
    <property type="pathway name" value="PIP3 activates AKT signaling"/>
</dbReference>
<dbReference type="Reactome" id="R-MMU-389356">
    <property type="pathway name" value="Co-stimulation by CD28"/>
</dbReference>
<dbReference type="Reactome" id="R-MMU-389357">
    <property type="pathway name" value="CD28 dependent PI3K/Akt signaling"/>
</dbReference>
<dbReference type="Reactome" id="R-MMU-389359">
    <property type="pathway name" value="CD28 dependent Vav1 pathway"/>
</dbReference>
<dbReference type="Reactome" id="R-MMU-389513">
    <property type="pathway name" value="Co-inhibition by CTLA4"/>
</dbReference>
<dbReference type="Reactome" id="R-MMU-6811558">
    <property type="pathway name" value="PI5P, PP2A and IER3 Regulate PI3K/AKT Signaling"/>
</dbReference>
<dbReference type="BioGRID-ORCS" id="12524">
    <property type="hits" value="3 hits in 80 CRISPR screens"/>
</dbReference>
<dbReference type="ChiTaRS" id="Cd86">
    <property type="organism name" value="mouse"/>
</dbReference>
<dbReference type="PRO" id="PR:P42082"/>
<dbReference type="Proteomes" id="UP000000589">
    <property type="component" value="Chromosome 16"/>
</dbReference>
<dbReference type="RNAct" id="P42082">
    <property type="molecule type" value="protein"/>
</dbReference>
<dbReference type="Bgee" id="ENSMUSG00000022901">
    <property type="expression patterns" value="Expressed in spleen and 99 other cell types or tissues"/>
</dbReference>
<dbReference type="ExpressionAtlas" id="P42082">
    <property type="expression patterns" value="baseline and differential"/>
</dbReference>
<dbReference type="GO" id="GO:0009897">
    <property type="term" value="C:external side of plasma membrane"/>
    <property type="evidence" value="ECO:0000314"/>
    <property type="project" value="MGI"/>
</dbReference>
<dbReference type="GO" id="GO:0043231">
    <property type="term" value="C:intracellular membrane-bounded organelle"/>
    <property type="evidence" value="ECO:0000314"/>
    <property type="project" value="MGI"/>
</dbReference>
<dbReference type="GO" id="GO:0002250">
    <property type="term" value="P:adaptive immune response"/>
    <property type="evidence" value="ECO:0007669"/>
    <property type="project" value="UniProtKB-KW"/>
</dbReference>
<dbReference type="GO" id="GO:0042113">
    <property type="term" value="P:B cell activation"/>
    <property type="evidence" value="ECO:0000314"/>
    <property type="project" value="UniProtKB"/>
</dbReference>
<dbReference type="GO" id="GO:0071222">
    <property type="term" value="P:cellular response to lipopolysaccharide"/>
    <property type="evidence" value="ECO:0000314"/>
    <property type="project" value="MGI"/>
</dbReference>
<dbReference type="GO" id="GO:0051607">
    <property type="term" value="P:defense response to virus"/>
    <property type="evidence" value="ECO:0000314"/>
    <property type="project" value="MGI"/>
</dbReference>
<dbReference type="GO" id="GO:0002639">
    <property type="term" value="P:positive regulation of immunoglobulin production"/>
    <property type="evidence" value="ECO:0000314"/>
    <property type="project" value="UniProtKB"/>
</dbReference>
<dbReference type="GO" id="GO:1901224">
    <property type="term" value="P:positive regulation of non-canonical NF-kappaB signal transduction"/>
    <property type="evidence" value="ECO:0000314"/>
    <property type="project" value="UniProtKB"/>
</dbReference>
<dbReference type="GO" id="GO:0042102">
    <property type="term" value="P:positive regulation of T cell proliferation"/>
    <property type="evidence" value="ECO:0000316"/>
    <property type="project" value="MGI"/>
</dbReference>
<dbReference type="GO" id="GO:0034138">
    <property type="term" value="P:toll-like receptor 3 signaling pathway"/>
    <property type="evidence" value="ECO:0000315"/>
    <property type="project" value="UniProtKB"/>
</dbReference>
<dbReference type="GO" id="GO:0002224">
    <property type="term" value="P:toll-like receptor signaling pathway"/>
    <property type="evidence" value="ECO:0000314"/>
    <property type="project" value="MGI"/>
</dbReference>
<dbReference type="CDD" id="cd16087">
    <property type="entry name" value="IgV_CD86"/>
    <property type="match status" value="1"/>
</dbReference>
<dbReference type="FunFam" id="2.60.40.10:FF:000765">
    <property type="entry name" value="CD86 isoform 1"/>
    <property type="match status" value="1"/>
</dbReference>
<dbReference type="FunFam" id="2.60.40.10:FF:000582">
    <property type="entry name" value="T-lymphocyte activation antigen CD86"/>
    <property type="match status" value="1"/>
</dbReference>
<dbReference type="Gene3D" id="2.60.40.10">
    <property type="entry name" value="Immunoglobulins"/>
    <property type="match status" value="2"/>
</dbReference>
<dbReference type="InterPro" id="IPR037677">
    <property type="entry name" value="CD86_IgV"/>
</dbReference>
<dbReference type="InterPro" id="IPR007110">
    <property type="entry name" value="Ig-like_dom"/>
</dbReference>
<dbReference type="InterPro" id="IPR036179">
    <property type="entry name" value="Ig-like_dom_sf"/>
</dbReference>
<dbReference type="InterPro" id="IPR013783">
    <property type="entry name" value="Ig-like_fold"/>
</dbReference>
<dbReference type="InterPro" id="IPR013106">
    <property type="entry name" value="Ig_V-set"/>
</dbReference>
<dbReference type="InterPro" id="IPR051713">
    <property type="entry name" value="T-cell_Activation_Regulation"/>
</dbReference>
<dbReference type="PANTHER" id="PTHR25466">
    <property type="entry name" value="T-LYMPHOCYTE ACTIVATION ANTIGEN"/>
    <property type="match status" value="1"/>
</dbReference>
<dbReference type="PANTHER" id="PTHR25466:SF2">
    <property type="entry name" value="T-LYMPHOCYTE ACTIVATION ANTIGEN CD86"/>
    <property type="match status" value="1"/>
</dbReference>
<dbReference type="Pfam" id="PF07686">
    <property type="entry name" value="V-set"/>
    <property type="match status" value="1"/>
</dbReference>
<dbReference type="SMART" id="SM00406">
    <property type="entry name" value="IGv"/>
    <property type="match status" value="1"/>
</dbReference>
<dbReference type="SUPFAM" id="SSF48726">
    <property type="entry name" value="Immunoglobulin"/>
    <property type="match status" value="1"/>
</dbReference>
<dbReference type="PROSITE" id="PS50835">
    <property type="entry name" value="IG_LIKE"/>
    <property type="match status" value="1"/>
</dbReference>
<organism>
    <name type="scientific">Mus musculus</name>
    <name type="common">Mouse</name>
    <dbReference type="NCBI Taxonomy" id="10090"/>
    <lineage>
        <taxon>Eukaryota</taxon>
        <taxon>Metazoa</taxon>
        <taxon>Chordata</taxon>
        <taxon>Craniata</taxon>
        <taxon>Vertebrata</taxon>
        <taxon>Euteleostomi</taxon>
        <taxon>Mammalia</taxon>
        <taxon>Eutheria</taxon>
        <taxon>Euarchontoglires</taxon>
        <taxon>Glires</taxon>
        <taxon>Rodentia</taxon>
        <taxon>Myomorpha</taxon>
        <taxon>Muroidea</taxon>
        <taxon>Muridae</taxon>
        <taxon>Murinae</taxon>
        <taxon>Mus</taxon>
        <taxon>Mus</taxon>
    </lineage>
</organism>
<feature type="signal peptide" evidence="3">
    <location>
        <begin position="1"/>
        <end position="23"/>
    </location>
</feature>
<feature type="chain" id="PRO_0000014551" description="T-lymphocyte activation antigen CD86">
    <location>
        <begin position="24"/>
        <end position="309"/>
    </location>
</feature>
<feature type="topological domain" description="Extracellular" evidence="3">
    <location>
        <begin position="24"/>
        <end position="244"/>
    </location>
</feature>
<feature type="transmembrane region" description="Helical" evidence="3">
    <location>
        <begin position="245"/>
        <end position="265"/>
    </location>
</feature>
<feature type="topological domain" description="Cytoplasmic" evidence="3">
    <location>
        <begin position="266"/>
        <end position="309"/>
    </location>
</feature>
<feature type="domain" description="Ig-like V-type">
    <location>
        <begin position="33"/>
        <end position="128"/>
    </location>
</feature>
<feature type="domain" description="Ig-like C2-type">
    <location>
        <begin position="150"/>
        <end position="223"/>
    </location>
</feature>
<feature type="region of interest" description="Disordered" evidence="5">
    <location>
        <begin position="269"/>
        <end position="309"/>
    </location>
</feature>
<feature type="compositionally biased region" description="Polar residues" evidence="5">
    <location>
        <begin position="269"/>
        <end position="279"/>
    </location>
</feature>
<feature type="compositionally biased region" description="Basic and acidic residues" evidence="5">
    <location>
        <begin position="280"/>
        <end position="298"/>
    </location>
</feature>
<feature type="glycosylation site" description="N-linked (GlcNAc...) asparagine" evidence="3">
    <location>
        <position position="33"/>
    </location>
</feature>
<feature type="glycosylation site" description="N-linked (GlcNAc...) asparagine" evidence="3">
    <location>
        <position position="47"/>
    </location>
</feature>
<feature type="glycosylation site" description="N-linked (GlcNAc...) asparagine" evidence="3">
    <location>
        <position position="92"/>
    </location>
</feature>
<feature type="glycosylation site" description="N-linked (GlcNAc...) asparagine" evidence="3">
    <location>
        <position position="135"/>
    </location>
</feature>
<feature type="glycosylation site" description="N-linked (GlcNAc...) asparagine" evidence="3">
    <location>
        <position position="146"/>
    </location>
</feature>
<feature type="glycosylation site" description="N-linked (GlcNAc...) asparagine" evidence="3">
    <location>
        <position position="154"/>
    </location>
</feature>
<feature type="glycosylation site" description="N-linked (GlcNAc...) asparagine" evidence="3">
    <location>
        <position position="175"/>
    </location>
</feature>
<feature type="glycosylation site" description="N-linked (GlcNAc...) asparagine" evidence="3">
    <location>
        <position position="190"/>
    </location>
</feature>
<feature type="glycosylation site" description="N-linked (GlcNAc...) asparagine" evidence="3">
    <location>
        <position position="231"/>
    </location>
</feature>
<feature type="disulfide bond" evidence="4">
    <location>
        <begin position="40"/>
        <end position="110"/>
    </location>
</feature>
<feature type="disulfide bond" evidence="4">
    <location>
        <begin position="157"/>
        <end position="216"/>
    </location>
</feature>
<feature type="splice variant" id="VSP_023125" description="In isoform 2." evidence="7">
    <location>
        <begin position="1"/>
        <end position="6"/>
    </location>
</feature>
<keyword id="KW-1064">Adaptive immunity</keyword>
<keyword id="KW-0025">Alternative splicing</keyword>
<keyword id="KW-1003">Cell membrane</keyword>
<keyword id="KW-1015">Disulfide bond</keyword>
<keyword id="KW-0325">Glycoprotein</keyword>
<keyword id="KW-0391">Immunity</keyword>
<keyword id="KW-0393">Immunoglobulin domain</keyword>
<keyword id="KW-0472">Membrane</keyword>
<keyword id="KW-0675">Receptor</keyword>
<keyword id="KW-1185">Reference proteome</keyword>
<keyword id="KW-0732">Signal</keyword>
<keyword id="KW-0812">Transmembrane</keyword>
<keyword id="KW-1133">Transmembrane helix</keyword>
<keyword id="KW-0832">Ubl conjugation</keyword>
<comment type="function">
    <text evidence="6">Receptor involved in the costimulatory signal essential for T-lymphocyte proliferation and interleukin-2 production, by binding CD28 or CTLA-4. May play a critical role in the early events of T-cell activation and costimulation of naive T-cells, such as deciding between immunity and anergy that is made by T-cells within 24 hours after activation. Also involved in the regulation of B cells function, plays a role in regulating the level of IgG(1) produced. Upon CD40 engagement, activates NF-kappa-B signaling pathway via phospholipase C and protein kinase C activation (PubMed:23241883).</text>
</comment>
<comment type="subunit">
    <text evidence="2 6">Homodimer. Interacts with MARCH8 (By similarity). Interacts (via cytoplasmic domain) with PHB1 and PHB2; the interactions increases after priming with CD40 (PubMed:23241883). Interacts with CD28 (By similarity).</text>
</comment>
<comment type="subcellular location">
    <subcellularLocation>
        <location evidence="1">Cell membrane</location>
        <topology evidence="1">Single-pass type I membrane protein</topology>
    </subcellularLocation>
</comment>
<comment type="alternative products">
    <event type="alternative splicing"/>
    <isoform>
        <id>P42082-1</id>
        <name>1</name>
        <sequence type="displayed"/>
    </isoform>
    <isoform>
        <id>P42082-2</id>
        <name>2</name>
        <sequence type="described" ref="VSP_023125"/>
    </isoform>
</comment>
<comment type="tissue specificity">
    <text>Expressed on activated B-cells.</text>
</comment>
<comment type="PTM">
    <text evidence="1">Polyubiquitinated; which is promoted by MARCH8 and results in endocytosis and lysosomal degradation.</text>
</comment>
<comment type="sequence caution" evidence="7">
    <conflict type="erroneous initiation">
        <sequence resource="EMBL-CDS" id="AAB30744"/>
    </conflict>
    <text>Truncated N-terminus.</text>
</comment>
<reference key="1">
    <citation type="journal article" date="1993" name="J. Exp. Med.">
        <title>Murine B7-2, an alternative CTLA4 counter-receptor that costimulates T cell proliferation and interleukin 2 production.</title>
        <authorList>
            <person name="Freeman G.J."/>
            <person name="Borriello F."/>
            <person name="Hodes R.J."/>
            <person name="Reiser H."/>
            <person name="Gribben J.G."/>
            <person name="Ng J.W."/>
            <person name="Kim J."/>
            <person name="Goldberg J.M."/>
            <person name="Hathcock K."/>
            <person name="Laszlo G."/>
            <person name="Lombard L.A."/>
            <person name="Wang S."/>
            <person name="Gray G.S."/>
            <person name="Nadler L.M."/>
            <person name="Sharpe A.H."/>
        </authorList>
    </citation>
    <scope>NUCLEOTIDE SEQUENCE [MRNA] (ISOFORM 1)</scope>
</reference>
<reference key="2">
    <citation type="journal article" date="1994" name="J. Immunol.">
        <title>Molecular cloning and expression of early T cell costimulatory molecule-1 and its characterization as B7-2 molecule.</title>
        <authorList>
            <person name="Chen C."/>
            <person name="Gault A."/>
            <person name="Shen L."/>
            <person name="Nabavi N."/>
        </authorList>
    </citation>
    <scope>NUCLEOTIDE SEQUENCE [MRNA] (ISOFORM 1)</scope>
</reference>
<reference key="3">
    <citation type="journal article" date="1995" name="J. Immunol.">
        <title>Differential expression of alternate mB7-2 transcripts.</title>
        <authorList>
            <person name="Borriello F."/>
            <person name="Oliveros J."/>
            <person name="Freeman G.J."/>
            <person name="Nadler L.M."/>
            <person name="Sharpe A.H."/>
        </authorList>
    </citation>
    <scope>NUCLEOTIDE SEQUENCE [GENOMIC DNA]</scope>
    <scope>ALTERNATIVE SPLICING</scope>
    <source>
        <strain>129</strain>
    </source>
</reference>
<reference key="4">
    <citation type="journal article" date="2013" name="J. Immunol.">
        <title>Prohibitins and the cytoplasmic domain of CD86 cooperate to mediate CD86 signaling in B lymphocytes.</title>
        <authorList>
            <person name="Lucas C.R."/>
            <person name="Cordero-Nieves H.M."/>
            <person name="Erbe R.S."/>
            <person name="McAlees J.W."/>
            <person name="Bhatia S."/>
            <person name="Hodes R.J."/>
            <person name="Campbell K.S."/>
            <person name="Sanders V.M."/>
        </authorList>
    </citation>
    <scope>FUNCTION</scope>
    <scope>INTERACTION WITH PHB1 AND PHB2</scope>
</reference>
<accession>P42082</accession>